<accession>Q927W7</accession>
<reference key="1">
    <citation type="journal article" date="2001" name="Science">
        <title>Comparative genomics of Listeria species.</title>
        <authorList>
            <person name="Glaser P."/>
            <person name="Frangeul L."/>
            <person name="Buchrieser C."/>
            <person name="Rusniok C."/>
            <person name="Amend A."/>
            <person name="Baquero F."/>
            <person name="Berche P."/>
            <person name="Bloecker H."/>
            <person name="Brandt P."/>
            <person name="Chakraborty T."/>
            <person name="Charbit A."/>
            <person name="Chetouani F."/>
            <person name="Couve E."/>
            <person name="de Daruvar A."/>
            <person name="Dehoux P."/>
            <person name="Domann E."/>
            <person name="Dominguez-Bernal G."/>
            <person name="Duchaud E."/>
            <person name="Durant L."/>
            <person name="Dussurget O."/>
            <person name="Entian K.-D."/>
            <person name="Fsihi H."/>
            <person name="Garcia-del Portillo F."/>
            <person name="Garrido P."/>
            <person name="Gautier L."/>
            <person name="Goebel W."/>
            <person name="Gomez-Lopez N."/>
            <person name="Hain T."/>
            <person name="Hauf J."/>
            <person name="Jackson D."/>
            <person name="Jones L.-M."/>
            <person name="Kaerst U."/>
            <person name="Kreft J."/>
            <person name="Kuhn M."/>
            <person name="Kunst F."/>
            <person name="Kurapkat G."/>
            <person name="Madueno E."/>
            <person name="Maitournam A."/>
            <person name="Mata Vicente J."/>
            <person name="Ng E."/>
            <person name="Nedjari H."/>
            <person name="Nordsiek G."/>
            <person name="Novella S."/>
            <person name="de Pablos B."/>
            <person name="Perez-Diaz J.-C."/>
            <person name="Purcell R."/>
            <person name="Remmel B."/>
            <person name="Rose M."/>
            <person name="Schlueter T."/>
            <person name="Simoes N."/>
            <person name="Tierrez A."/>
            <person name="Vazquez-Boland J.-A."/>
            <person name="Voss H."/>
            <person name="Wehland J."/>
            <person name="Cossart P."/>
        </authorList>
    </citation>
    <scope>NUCLEOTIDE SEQUENCE [LARGE SCALE GENOMIC DNA]</scope>
    <source>
        <strain>ATCC BAA-680 / CLIP 11262</strain>
    </source>
</reference>
<name>MURA1_LISIN</name>
<sequence>MEKIIVRGGKQLNGSVKMEGAKNAVLPVIAATLLASKGTSVLKNVPNLSDVFTINEVLKYLNADVSFVNDEVTVDATGEITSDAPFEYVRKMRASIVVMGPLLARTGSARVALPGGCAIGSRPVDLHLKGFEAMGAIVKIENGYIEATAEKLVGAKVYLDFPSVGATQNIMMAATLAEGTTVIENVAREPEIVDLANFLNQMGARVIGAGTEVIRIEGVKELTATEHSIIPDRIEAGTFMIAAAITGGNVLIEDAVPEHISSLIAKLEEMGVQIIEEENGIRVIGPDKLKAVDVKTMPHPGFPTDMQSQMMVIQMLSEGTSIMTETVFENRFMHVEEMRRMNADMKIEGHSVIISGPAKLQGAEVAATDLRAAAALILAGLVADGYTQVTELKYLDRGYNNFHGKLQALGADVERVDDSKIDVTNLASLF</sequence>
<evidence type="ECO:0000255" key="1">
    <source>
        <dbReference type="HAMAP-Rule" id="MF_00111"/>
    </source>
</evidence>
<gene>
    <name evidence="1" type="primary">murA1</name>
    <name type="synonym">murA</name>
    <name type="ordered locus">lin2670</name>
</gene>
<feature type="chain" id="PRO_0000178883" description="UDP-N-acetylglucosamine 1-carboxyvinyltransferase 1">
    <location>
        <begin position="1"/>
        <end position="430"/>
    </location>
</feature>
<feature type="active site" description="Proton donor" evidence="1">
    <location>
        <position position="117"/>
    </location>
</feature>
<feature type="binding site" evidence="1">
    <location>
        <begin position="22"/>
        <end position="23"/>
    </location>
    <ligand>
        <name>phosphoenolpyruvate</name>
        <dbReference type="ChEBI" id="CHEBI:58702"/>
    </ligand>
</feature>
<feature type="binding site" evidence="1">
    <location>
        <position position="93"/>
    </location>
    <ligand>
        <name>UDP-N-acetyl-alpha-D-glucosamine</name>
        <dbReference type="ChEBI" id="CHEBI:57705"/>
    </ligand>
</feature>
<feature type="binding site" evidence="1">
    <location>
        <begin position="122"/>
        <end position="126"/>
    </location>
    <ligand>
        <name>UDP-N-acetyl-alpha-D-glucosamine</name>
        <dbReference type="ChEBI" id="CHEBI:57705"/>
    </ligand>
</feature>
<feature type="binding site" evidence="1">
    <location>
        <position position="305"/>
    </location>
    <ligand>
        <name>UDP-N-acetyl-alpha-D-glucosamine</name>
        <dbReference type="ChEBI" id="CHEBI:57705"/>
    </ligand>
</feature>
<feature type="binding site" evidence="1">
    <location>
        <position position="327"/>
    </location>
    <ligand>
        <name>UDP-N-acetyl-alpha-D-glucosamine</name>
        <dbReference type="ChEBI" id="CHEBI:57705"/>
    </ligand>
</feature>
<feature type="modified residue" description="2-(S-cysteinyl)pyruvic acid O-phosphothioketal" evidence="1">
    <location>
        <position position="117"/>
    </location>
</feature>
<proteinExistence type="inferred from homology"/>
<keyword id="KW-0131">Cell cycle</keyword>
<keyword id="KW-0132">Cell division</keyword>
<keyword id="KW-0133">Cell shape</keyword>
<keyword id="KW-0961">Cell wall biogenesis/degradation</keyword>
<keyword id="KW-0963">Cytoplasm</keyword>
<keyword id="KW-0573">Peptidoglycan synthesis</keyword>
<keyword id="KW-0670">Pyruvate</keyword>
<keyword id="KW-0808">Transferase</keyword>
<comment type="function">
    <text evidence="1">Cell wall formation. Adds enolpyruvyl to UDP-N-acetylglucosamine.</text>
</comment>
<comment type="catalytic activity">
    <reaction evidence="1">
        <text>phosphoenolpyruvate + UDP-N-acetyl-alpha-D-glucosamine = UDP-N-acetyl-3-O-(1-carboxyvinyl)-alpha-D-glucosamine + phosphate</text>
        <dbReference type="Rhea" id="RHEA:18681"/>
        <dbReference type="ChEBI" id="CHEBI:43474"/>
        <dbReference type="ChEBI" id="CHEBI:57705"/>
        <dbReference type="ChEBI" id="CHEBI:58702"/>
        <dbReference type="ChEBI" id="CHEBI:68483"/>
        <dbReference type="EC" id="2.5.1.7"/>
    </reaction>
</comment>
<comment type="pathway">
    <text evidence="1">Cell wall biogenesis; peptidoglycan biosynthesis.</text>
</comment>
<comment type="subcellular location">
    <subcellularLocation>
        <location evidence="1">Cytoplasm</location>
    </subcellularLocation>
</comment>
<comment type="similarity">
    <text evidence="1">Belongs to the EPSP synthase family. MurA subfamily.</text>
</comment>
<protein>
    <recommendedName>
        <fullName evidence="1">UDP-N-acetylglucosamine 1-carboxyvinyltransferase 1</fullName>
        <ecNumber evidence="1">2.5.1.7</ecNumber>
    </recommendedName>
    <alternativeName>
        <fullName evidence="1">Enoylpyruvate transferase 1</fullName>
    </alternativeName>
    <alternativeName>
        <fullName evidence="1">UDP-N-acetylglucosamine enolpyruvyl transferase 1</fullName>
        <shortName evidence="1">EPT 1</shortName>
    </alternativeName>
</protein>
<organism>
    <name type="scientific">Listeria innocua serovar 6a (strain ATCC BAA-680 / CLIP 11262)</name>
    <dbReference type="NCBI Taxonomy" id="272626"/>
    <lineage>
        <taxon>Bacteria</taxon>
        <taxon>Bacillati</taxon>
        <taxon>Bacillota</taxon>
        <taxon>Bacilli</taxon>
        <taxon>Bacillales</taxon>
        <taxon>Listeriaceae</taxon>
        <taxon>Listeria</taxon>
    </lineage>
</organism>
<dbReference type="EC" id="2.5.1.7" evidence="1"/>
<dbReference type="EMBL" id="AL596173">
    <property type="protein sequence ID" value="CAC97896.1"/>
    <property type="molecule type" value="Genomic_DNA"/>
</dbReference>
<dbReference type="PIR" id="AH1765">
    <property type="entry name" value="AH1765"/>
</dbReference>
<dbReference type="RefSeq" id="WP_003772302.1">
    <property type="nucleotide sequence ID" value="NC_003212.1"/>
</dbReference>
<dbReference type="SMR" id="Q927W7"/>
<dbReference type="STRING" id="272626.gene:17567050"/>
<dbReference type="GeneID" id="93235933"/>
<dbReference type="KEGG" id="lin:murA"/>
<dbReference type="eggNOG" id="COG0766">
    <property type="taxonomic scope" value="Bacteria"/>
</dbReference>
<dbReference type="HOGENOM" id="CLU_027387_0_0_9"/>
<dbReference type="OrthoDB" id="9803760at2"/>
<dbReference type="UniPathway" id="UPA00219"/>
<dbReference type="Proteomes" id="UP000002513">
    <property type="component" value="Chromosome"/>
</dbReference>
<dbReference type="GO" id="GO:0005737">
    <property type="term" value="C:cytoplasm"/>
    <property type="evidence" value="ECO:0007669"/>
    <property type="project" value="UniProtKB-SubCell"/>
</dbReference>
<dbReference type="GO" id="GO:0008760">
    <property type="term" value="F:UDP-N-acetylglucosamine 1-carboxyvinyltransferase activity"/>
    <property type="evidence" value="ECO:0007669"/>
    <property type="project" value="UniProtKB-UniRule"/>
</dbReference>
<dbReference type="GO" id="GO:0051301">
    <property type="term" value="P:cell division"/>
    <property type="evidence" value="ECO:0007669"/>
    <property type="project" value="UniProtKB-KW"/>
</dbReference>
<dbReference type="GO" id="GO:0071555">
    <property type="term" value="P:cell wall organization"/>
    <property type="evidence" value="ECO:0007669"/>
    <property type="project" value="UniProtKB-KW"/>
</dbReference>
<dbReference type="GO" id="GO:0009252">
    <property type="term" value="P:peptidoglycan biosynthetic process"/>
    <property type="evidence" value="ECO:0007669"/>
    <property type="project" value="UniProtKB-UniRule"/>
</dbReference>
<dbReference type="GO" id="GO:0008360">
    <property type="term" value="P:regulation of cell shape"/>
    <property type="evidence" value="ECO:0007669"/>
    <property type="project" value="UniProtKB-KW"/>
</dbReference>
<dbReference type="GO" id="GO:0019277">
    <property type="term" value="P:UDP-N-acetylgalactosamine biosynthetic process"/>
    <property type="evidence" value="ECO:0007669"/>
    <property type="project" value="InterPro"/>
</dbReference>
<dbReference type="CDD" id="cd01555">
    <property type="entry name" value="UdpNAET"/>
    <property type="match status" value="1"/>
</dbReference>
<dbReference type="FunFam" id="3.65.10.10:FF:000001">
    <property type="entry name" value="UDP-N-acetylglucosamine 1-carboxyvinyltransferase"/>
    <property type="match status" value="1"/>
</dbReference>
<dbReference type="Gene3D" id="3.65.10.10">
    <property type="entry name" value="Enolpyruvate transferase domain"/>
    <property type="match status" value="2"/>
</dbReference>
<dbReference type="HAMAP" id="MF_00111">
    <property type="entry name" value="MurA"/>
    <property type="match status" value="1"/>
</dbReference>
<dbReference type="InterPro" id="IPR001986">
    <property type="entry name" value="Enolpyruvate_Tfrase_dom"/>
</dbReference>
<dbReference type="InterPro" id="IPR036968">
    <property type="entry name" value="Enolpyruvate_Tfrase_sf"/>
</dbReference>
<dbReference type="InterPro" id="IPR050068">
    <property type="entry name" value="MurA_subfamily"/>
</dbReference>
<dbReference type="InterPro" id="IPR013792">
    <property type="entry name" value="RNA3'P_cycl/enolpyr_Trfase_a/b"/>
</dbReference>
<dbReference type="InterPro" id="IPR005750">
    <property type="entry name" value="UDP_GlcNAc_COvinyl_MurA"/>
</dbReference>
<dbReference type="NCBIfam" id="TIGR01072">
    <property type="entry name" value="murA"/>
    <property type="match status" value="1"/>
</dbReference>
<dbReference type="NCBIfam" id="NF006873">
    <property type="entry name" value="PRK09369.1"/>
    <property type="match status" value="1"/>
</dbReference>
<dbReference type="PANTHER" id="PTHR43783">
    <property type="entry name" value="UDP-N-ACETYLGLUCOSAMINE 1-CARBOXYVINYLTRANSFERASE"/>
    <property type="match status" value="1"/>
</dbReference>
<dbReference type="PANTHER" id="PTHR43783:SF1">
    <property type="entry name" value="UDP-N-ACETYLGLUCOSAMINE 1-CARBOXYVINYLTRANSFERASE"/>
    <property type="match status" value="1"/>
</dbReference>
<dbReference type="Pfam" id="PF00275">
    <property type="entry name" value="EPSP_synthase"/>
    <property type="match status" value="1"/>
</dbReference>
<dbReference type="SUPFAM" id="SSF55205">
    <property type="entry name" value="EPT/RTPC-like"/>
    <property type="match status" value="1"/>
</dbReference>